<accession>Q81KQ2</accession>
<accession>Q6HS59</accession>
<accession>Q6KLF9</accession>
<reference key="1">
    <citation type="journal article" date="2003" name="Nature">
        <title>The genome sequence of Bacillus anthracis Ames and comparison to closely related bacteria.</title>
        <authorList>
            <person name="Read T.D."/>
            <person name="Peterson S.N."/>
            <person name="Tourasse N.J."/>
            <person name="Baillie L.W."/>
            <person name="Paulsen I.T."/>
            <person name="Nelson K.E."/>
            <person name="Tettelin H."/>
            <person name="Fouts D.E."/>
            <person name="Eisen J.A."/>
            <person name="Gill S.R."/>
            <person name="Holtzapple E.K."/>
            <person name="Okstad O.A."/>
            <person name="Helgason E."/>
            <person name="Rilstone J."/>
            <person name="Wu M."/>
            <person name="Kolonay J.F."/>
            <person name="Beanan M.J."/>
            <person name="Dodson R.J."/>
            <person name="Brinkac L.M."/>
            <person name="Gwinn M.L."/>
            <person name="DeBoy R.T."/>
            <person name="Madpu R."/>
            <person name="Daugherty S.C."/>
            <person name="Durkin A.S."/>
            <person name="Haft D.H."/>
            <person name="Nelson W.C."/>
            <person name="Peterson J.D."/>
            <person name="Pop M."/>
            <person name="Khouri H.M."/>
            <person name="Radune D."/>
            <person name="Benton J.L."/>
            <person name="Mahamoud Y."/>
            <person name="Jiang L."/>
            <person name="Hance I.R."/>
            <person name="Weidman J.F."/>
            <person name="Berry K.J."/>
            <person name="Plaut R.D."/>
            <person name="Wolf A.M."/>
            <person name="Watkins K.L."/>
            <person name="Nierman W.C."/>
            <person name="Hazen A."/>
            <person name="Cline R.T."/>
            <person name="Redmond C."/>
            <person name="Thwaite J.E."/>
            <person name="White O."/>
            <person name="Salzberg S.L."/>
            <person name="Thomason B."/>
            <person name="Friedlander A.M."/>
            <person name="Koehler T.M."/>
            <person name="Hanna P.C."/>
            <person name="Kolstoe A.-B."/>
            <person name="Fraser C.M."/>
        </authorList>
    </citation>
    <scope>NUCLEOTIDE SEQUENCE [LARGE SCALE GENOMIC DNA]</scope>
    <source>
        <strain>Ames / isolate Porton</strain>
    </source>
</reference>
<reference key="2">
    <citation type="journal article" date="2009" name="J. Bacteriol.">
        <title>The complete genome sequence of Bacillus anthracis Ames 'Ancestor'.</title>
        <authorList>
            <person name="Ravel J."/>
            <person name="Jiang L."/>
            <person name="Stanley S.T."/>
            <person name="Wilson M.R."/>
            <person name="Decker R.S."/>
            <person name="Read T.D."/>
            <person name="Worsham P."/>
            <person name="Keim P.S."/>
            <person name="Salzberg S.L."/>
            <person name="Fraser-Liggett C.M."/>
            <person name="Rasko D.A."/>
        </authorList>
    </citation>
    <scope>NUCLEOTIDE SEQUENCE [LARGE SCALE GENOMIC DNA]</scope>
    <source>
        <strain>Ames ancestor</strain>
    </source>
</reference>
<reference key="3">
    <citation type="submission" date="2004-01" db="EMBL/GenBank/DDBJ databases">
        <title>Complete genome sequence of Bacillus anthracis Sterne.</title>
        <authorList>
            <person name="Brettin T.S."/>
            <person name="Bruce D."/>
            <person name="Challacombe J.F."/>
            <person name="Gilna P."/>
            <person name="Han C."/>
            <person name="Hill K."/>
            <person name="Hitchcock P."/>
            <person name="Jackson P."/>
            <person name="Keim P."/>
            <person name="Longmire J."/>
            <person name="Lucas S."/>
            <person name="Okinaka R."/>
            <person name="Richardson P."/>
            <person name="Rubin E."/>
            <person name="Tice H."/>
        </authorList>
    </citation>
    <scope>NUCLEOTIDE SEQUENCE [LARGE SCALE GENOMIC DNA]</scope>
    <source>
        <strain>Sterne</strain>
    </source>
</reference>
<feature type="chain" id="PRO_0000182047" description="UDP-N-acetylmuramate--L-alanine ligase">
    <location>
        <begin position="1"/>
        <end position="436"/>
    </location>
</feature>
<feature type="binding site" evidence="1">
    <location>
        <begin position="108"/>
        <end position="114"/>
    </location>
    <ligand>
        <name>ATP</name>
        <dbReference type="ChEBI" id="CHEBI:30616"/>
    </ligand>
</feature>
<sequence>MTVYHFVGIKGTGMSSLAQILHDMKHTVQGSDYEKRFFTQTALEKRNISILPFDKSNVKEGQVIIAGNAFPDTHEEIVAAKELNIPVHRYHHFLGDLMNQYTSVAVTGAHGKTSTTGLLAHVMQGAHPTSYLIGDGTGHGVENSKYFVFEACEYRRHFLSYNPDYAIMTNIDFDHPDYFTDINDVFSAFQEMALQVKKGIIACGDDEELQKIQAKVPVIFYGFGEDNDFQARNIQKRTDGTIFDVFVRNTYYDTFKITGYGNHSVLNALAVIALCHYENVDVEAVKHQLTTFEGVKRRFNEKPMGEQVIIDDYAHHPTEINATIEAARQKHPEREIVAVFQPHTFSRTEKFLDEFAESLSKADQVYLCDIFGSARENKGELTIEDLQKRIDGAELITDTTTDVLKKHKNGVLIFMGAGDIQKFEAAYVKEVQVAEK</sequence>
<dbReference type="EC" id="6.3.2.8" evidence="1"/>
<dbReference type="EMBL" id="AE016879">
    <property type="protein sequence ID" value="AAP28622.1"/>
    <property type="molecule type" value="Genomic_DNA"/>
</dbReference>
<dbReference type="EMBL" id="AE017334">
    <property type="protein sequence ID" value="AAT34059.1"/>
    <property type="molecule type" value="Genomic_DNA"/>
</dbReference>
<dbReference type="EMBL" id="AE017225">
    <property type="protein sequence ID" value="AAT56879.1"/>
    <property type="molecule type" value="Genomic_DNA"/>
</dbReference>
<dbReference type="RefSeq" id="NP_847136.1">
    <property type="nucleotide sequence ID" value="NC_003997.3"/>
</dbReference>
<dbReference type="RefSeq" id="WP_000219465.1">
    <property type="nucleotide sequence ID" value="NZ_WXXJ01000026.1"/>
</dbReference>
<dbReference type="RefSeq" id="YP_030829.1">
    <property type="nucleotide sequence ID" value="NC_005945.1"/>
</dbReference>
<dbReference type="SMR" id="Q81KQ2"/>
<dbReference type="STRING" id="261594.GBAA_4938"/>
<dbReference type="DNASU" id="1084140"/>
<dbReference type="GeneID" id="45024558"/>
<dbReference type="KEGG" id="ban:BA_4938"/>
<dbReference type="KEGG" id="banh:HYU01_24060"/>
<dbReference type="KEGG" id="bar:GBAA_4938"/>
<dbReference type="KEGG" id="bat:BAS4583"/>
<dbReference type="PATRIC" id="fig|198094.11.peg.4898"/>
<dbReference type="eggNOG" id="COG0773">
    <property type="taxonomic scope" value="Bacteria"/>
</dbReference>
<dbReference type="HOGENOM" id="CLU_028104_1_0_9"/>
<dbReference type="OMA" id="DITYQLR"/>
<dbReference type="OrthoDB" id="9804126at2"/>
<dbReference type="UniPathway" id="UPA00219"/>
<dbReference type="Proteomes" id="UP000000427">
    <property type="component" value="Chromosome"/>
</dbReference>
<dbReference type="Proteomes" id="UP000000594">
    <property type="component" value="Chromosome"/>
</dbReference>
<dbReference type="GO" id="GO:0005737">
    <property type="term" value="C:cytoplasm"/>
    <property type="evidence" value="ECO:0007669"/>
    <property type="project" value="UniProtKB-SubCell"/>
</dbReference>
<dbReference type="GO" id="GO:0005524">
    <property type="term" value="F:ATP binding"/>
    <property type="evidence" value="ECO:0007669"/>
    <property type="project" value="UniProtKB-UniRule"/>
</dbReference>
<dbReference type="GO" id="GO:0008763">
    <property type="term" value="F:UDP-N-acetylmuramate-L-alanine ligase activity"/>
    <property type="evidence" value="ECO:0007669"/>
    <property type="project" value="UniProtKB-UniRule"/>
</dbReference>
<dbReference type="GO" id="GO:0051301">
    <property type="term" value="P:cell division"/>
    <property type="evidence" value="ECO:0007669"/>
    <property type="project" value="UniProtKB-KW"/>
</dbReference>
<dbReference type="GO" id="GO:0071555">
    <property type="term" value="P:cell wall organization"/>
    <property type="evidence" value="ECO:0007669"/>
    <property type="project" value="UniProtKB-KW"/>
</dbReference>
<dbReference type="GO" id="GO:0009252">
    <property type="term" value="P:peptidoglycan biosynthetic process"/>
    <property type="evidence" value="ECO:0007669"/>
    <property type="project" value="UniProtKB-UniRule"/>
</dbReference>
<dbReference type="GO" id="GO:0008360">
    <property type="term" value="P:regulation of cell shape"/>
    <property type="evidence" value="ECO:0007669"/>
    <property type="project" value="UniProtKB-KW"/>
</dbReference>
<dbReference type="Gene3D" id="3.90.190.20">
    <property type="entry name" value="Mur ligase, C-terminal domain"/>
    <property type="match status" value="1"/>
</dbReference>
<dbReference type="Gene3D" id="3.40.1190.10">
    <property type="entry name" value="Mur-like, catalytic domain"/>
    <property type="match status" value="1"/>
</dbReference>
<dbReference type="Gene3D" id="3.40.50.720">
    <property type="entry name" value="NAD(P)-binding Rossmann-like Domain"/>
    <property type="match status" value="1"/>
</dbReference>
<dbReference type="HAMAP" id="MF_00046">
    <property type="entry name" value="MurC"/>
    <property type="match status" value="1"/>
</dbReference>
<dbReference type="InterPro" id="IPR036565">
    <property type="entry name" value="Mur-like_cat_sf"/>
</dbReference>
<dbReference type="InterPro" id="IPR004101">
    <property type="entry name" value="Mur_ligase_C"/>
</dbReference>
<dbReference type="InterPro" id="IPR036615">
    <property type="entry name" value="Mur_ligase_C_dom_sf"/>
</dbReference>
<dbReference type="InterPro" id="IPR013221">
    <property type="entry name" value="Mur_ligase_cen"/>
</dbReference>
<dbReference type="InterPro" id="IPR000713">
    <property type="entry name" value="Mur_ligase_N"/>
</dbReference>
<dbReference type="InterPro" id="IPR050061">
    <property type="entry name" value="MurCDEF_pg_biosynth"/>
</dbReference>
<dbReference type="InterPro" id="IPR005758">
    <property type="entry name" value="UDP-N-AcMur_Ala_ligase_MurC"/>
</dbReference>
<dbReference type="NCBIfam" id="TIGR01082">
    <property type="entry name" value="murC"/>
    <property type="match status" value="1"/>
</dbReference>
<dbReference type="PANTHER" id="PTHR43445:SF3">
    <property type="entry name" value="UDP-N-ACETYLMURAMATE--L-ALANINE LIGASE"/>
    <property type="match status" value="1"/>
</dbReference>
<dbReference type="PANTHER" id="PTHR43445">
    <property type="entry name" value="UDP-N-ACETYLMURAMATE--L-ALANINE LIGASE-RELATED"/>
    <property type="match status" value="1"/>
</dbReference>
<dbReference type="Pfam" id="PF01225">
    <property type="entry name" value="Mur_ligase"/>
    <property type="match status" value="1"/>
</dbReference>
<dbReference type="Pfam" id="PF02875">
    <property type="entry name" value="Mur_ligase_C"/>
    <property type="match status" value="1"/>
</dbReference>
<dbReference type="Pfam" id="PF08245">
    <property type="entry name" value="Mur_ligase_M"/>
    <property type="match status" value="1"/>
</dbReference>
<dbReference type="SUPFAM" id="SSF51984">
    <property type="entry name" value="MurCD N-terminal domain"/>
    <property type="match status" value="1"/>
</dbReference>
<dbReference type="SUPFAM" id="SSF53623">
    <property type="entry name" value="MurD-like peptide ligases, catalytic domain"/>
    <property type="match status" value="1"/>
</dbReference>
<dbReference type="SUPFAM" id="SSF53244">
    <property type="entry name" value="MurD-like peptide ligases, peptide-binding domain"/>
    <property type="match status" value="1"/>
</dbReference>
<organism>
    <name type="scientific">Bacillus anthracis</name>
    <dbReference type="NCBI Taxonomy" id="1392"/>
    <lineage>
        <taxon>Bacteria</taxon>
        <taxon>Bacillati</taxon>
        <taxon>Bacillota</taxon>
        <taxon>Bacilli</taxon>
        <taxon>Bacillales</taxon>
        <taxon>Bacillaceae</taxon>
        <taxon>Bacillus</taxon>
        <taxon>Bacillus cereus group</taxon>
    </lineage>
</organism>
<protein>
    <recommendedName>
        <fullName evidence="1">UDP-N-acetylmuramate--L-alanine ligase</fullName>
        <ecNumber evidence="1">6.3.2.8</ecNumber>
    </recommendedName>
    <alternativeName>
        <fullName evidence="1">UDP-N-acetylmuramoyl-L-alanine synthetase</fullName>
    </alternativeName>
</protein>
<gene>
    <name evidence="1" type="primary">murC</name>
    <name type="ordered locus">BA_4938</name>
    <name type="ordered locus">GBAA_4938</name>
    <name type="ordered locus">BAS4583</name>
</gene>
<proteinExistence type="inferred from homology"/>
<keyword id="KW-0067">ATP-binding</keyword>
<keyword id="KW-0131">Cell cycle</keyword>
<keyword id="KW-0132">Cell division</keyword>
<keyword id="KW-0133">Cell shape</keyword>
<keyword id="KW-0961">Cell wall biogenesis/degradation</keyword>
<keyword id="KW-0963">Cytoplasm</keyword>
<keyword id="KW-0436">Ligase</keyword>
<keyword id="KW-0547">Nucleotide-binding</keyword>
<keyword id="KW-0573">Peptidoglycan synthesis</keyword>
<keyword id="KW-1185">Reference proteome</keyword>
<evidence type="ECO:0000255" key="1">
    <source>
        <dbReference type="HAMAP-Rule" id="MF_00046"/>
    </source>
</evidence>
<name>MURC_BACAN</name>
<comment type="function">
    <text evidence="1">Cell wall formation.</text>
</comment>
<comment type="catalytic activity">
    <reaction evidence="1">
        <text>UDP-N-acetyl-alpha-D-muramate + L-alanine + ATP = UDP-N-acetyl-alpha-D-muramoyl-L-alanine + ADP + phosphate + H(+)</text>
        <dbReference type="Rhea" id="RHEA:23372"/>
        <dbReference type="ChEBI" id="CHEBI:15378"/>
        <dbReference type="ChEBI" id="CHEBI:30616"/>
        <dbReference type="ChEBI" id="CHEBI:43474"/>
        <dbReference type="ChEBI" id="CHEBI:57972"/>
        <dbReference type="ChEBI" id="CHEBI:70757"/>
        <dbReference type="ChEBI" id="CHEBI:83898"/>
        <dbReference type="ChEBI" id="CHEBI:456216"/>
        <dbReference type="EC" id="6.3.2.8"/>
    </reaction>
</comment>
<comment type="pathway">
    <text evidence="1">Cell wall biogenesis; peptidoglycan biosynthesis.</text>
</comment>
<comment type="subcellular location">
    <subcellularLocation>
        <location evidence="1">Cytoplasm</location>
    </subcellularLocation>
</comment>
<comment type="similarity">
    <text evidence="1">Belongs to the MurCDEF family.</text>
</comment>